<proteinExistence type="inferred from homology"/>
<name>NDK_RHOOB</name>
<comment type="function">
    <text evidence="1">Major role in the synthesis of nucleoside triphosphates other than ATP. The ATP gamma phosphate is transferred to the NDP beta phosphate via a ping-pong mechanism, using a phosphorylated active-site intermediate.</text>
</comment>
<comment type="catalytic activity">
    <reaction evidence="1">
        <text>a 2'-deoxyribonucleoside 5'-diphosphate + ATP = a 2'-deoxyribonucleoside 5'-triphosphate + ADP</text>
        <dbReference type="Rhea" id="RHEA:44640"/>
        <dbReference type="ChEBI" id="CHEBI:30616"/>
        <dbReference type="ChEBI" id="CHEBI:61560"/>
        <dbReference type="ChEBI" id="CHEBI:73316"/>
        <dbReference type="ChEBI" id="CHEBI:456216"/>
        <dbReference type="EC" id="2.7.4.6"/>
    </reaction>
</comment>
<comment type="catalytic activity">
    <reaction evidence="1">
        <text>a ribonucleoside 5'-diphosphate + ATP = a ribonucleoside 5'-triphosphate + ADP</text>
        <dbReference type="Rhea" id="RHEA:18113"/>
        <dbReference type="ChEBI" id="CHEBI:30616"/>
        <dbReference type="ChEBI" id="CHEBI:57930"/>
        <dbReference type="ChEBI" id="CHEBI:61557"/>
        <dbReference type="ChEBI" id="CHEBI:456216"/>
        <dbReference type="EC" id="2.7.4.6"/>
    </reaction>
</comment>
<comment type="cofactor">
    <cofactor evidence="1">
        <name>Mg(2+)</name>
        <dbReference type="ChEBI" id="CHEBI:18420"/>
    </cofactor>
</comment>
<comment type="subunit">
    <text evidence="1">Homotetramer.</text>
</comment>
<comment type="subcellular location">
    <subcellularLocation>
        <location evidence="1">Cytoplasm</location>
    </subcellularLocation>
</comment>
<comment type="similarity">
    <text evidence="1">Belongs to the NDK family.</text>
</comment>
<reference key="1">
    <citation type="submission" date="2009-03" db="EMBL/GenBank/DDBJ databases">
        <title>Comparison of the complete genome sequences of Rhodococcus erythropolis PR4 and Rhodococcus opacus B4.</title>
        <authorList>
            <person name="Takarada H."/>
            <person name="Sekine M."/>
            <person name="Hosoyama A."/>
            <person name="Yamada R."/>
            <person name="Fujisawa T."/>
            <person name="Omata S."/>
            <person name="Shimizu A."/>
            <person name="Tsukatani N."/>
            <person name="Tanikawa S."/>
            <person name="Fujita N."/>
            <person name="Harayama S."/>
        </authorList>
    </citation>
    <scope>NUCLEOTIDE SEQUENCE [LARGE SCALE GENOMIC DNA]</scope>
    <source>
        <strain>B4</strain>
    </source>
</reference>
<gene>
    <name evidence="1" type="primary">ndk</name>
    <name type="ordered locus">ROP_10370</name>
</gene>
<accession>C1AVK4</accession>
<dbReference type="EC" id="2.7.4.6" evidence="1"/>
<dbReference type="EMBL" id="AP011115">
    <property type="protein sequence ID" value="BAH49284.1"/>
    <property type="molecule type" value="Genomic_DNA"/>
</dbReference>
<dbReference type="RefSeq" id="WP_012688269.1">
    <property type="nucleotide sequence ID" value="NC_012522.1"/>
</dbReference>
<dbReference type="SMR" id="C1AVK4"/>
<dbReference type="STRING" id="632772.ROP_10370"/>
<dbReference type="KEGG" id="rop:ROP_10370"/>
<dbReference type="PATRIC" id="fig|632772.20.peg.1104"/>
<dbReference type="HOGENOM" id="CLU_060216_6_3_11"/>
<dbReference type="OrthoDB" id="9801161at2"/>
<dbReference type="Proteomes" id="UP000002212">
    <property type="component" value="Chromosome"/>
</dbReference>
<dbReference type="GO" id="GO:0005737">
    <property type="term" value="C:cytoplasm"/>
    <property type="evidence" value="ECO:0007669"/>
    <property type="project" value="UniProtKB-SubCell"/>
</dbReference>
<dbReference type="GO" id="GO:0005524">
    <property type="term" value="F:ATP binding"/>
    <property type="evidence" value="ECO:0007669"/>
    <property type="project" value="UniProtKB-UniRule"/>
</dbReference>
<dbReference type="GO" id="GO:0046872">
    <property type="term" value="F:metal ion binding"/>
    <property type="evidence" value="ECO:0007669"/>
    <property type="project" value="UniProtKB-KW"/>
</dbReference>
<dbReference type="GO" id="GO:0004550">
    <property type="term" value="F:nucleoside diphosphate kinase activity"/>
    <property type="evidence" value="ECO:0007669"/>
    <property type="project" value="UniProtKB-UniRule"/>
</dbReference>
<dbReference type="GO" id="GO:0006241">
    <property type="term" value="P:CTP biosynthetic process"/>
    <property type="evidence" value="ECO:0007669"/>
    <property type="project" value="UniProtKB-UniRule"/>
</dbReference>
<dbReference type="GO" id="GO:0006183">
    <property type="term" value="P:GTP biosynthetic process"/>
    <property type="evidence" value="ECO:0007669"/>
    <property type="project" value="UniProtKB-UniRule"/>
</dbReference>
<dbReference type="GO" id="GO:0006228">
    <property type="term" value="P:UTP biosynthetic process"/>
    <property type="evidence" value="ECO:0007669"/>
    <property type="project" value="UniProtKB-UniRule"/>
</dbReference>
<dbReference type="CDD" id="cd04413">
    <property type="entry name" value="NDPk_I"/>
    <property type="match status" value="1"/>
</dbReference>
<dbReference type="FunFam" id="3.30.70.141:FF:000003">
    <property type="entry name" value="Nucleoside diphosphate kinase"/>
    <property type="match status" value="1"/>
</dbReference>
<dbReference type="Gene3D" id="3.30.70.141">
    <property type="entry name" value="Nucleoside diphosphate kinase-like domain"/>
    <property type="match status" value="1"/>
</dbReference>
<dbReference type="HAMAP" id="MF_00451">
    <property type="entry name" value="NDP_kinase"/>
    <property type="match status" value="1"/>
</dbReference>
<dbReference type="InterPro" id="IPR034907">
    <property type="entry name" value="NDK-like_dom"/>
</dbReference>
<dbReference type="InterPro" id="IPR036850">
    <property type="entry name" value="NDK-like_dom_sf"/>
</dbReference>
<dbReference type="InterPro" id="IPR001564">
    <property type="entry name" value="Nucleoside_diP_kinase"/>
</dbReference>
<dbReference type="InterPro" id="IPR023005">
    <property type="entry name" value="Nucleoside_diP_kinase_AS"/>
</dbReference>
<dbReference type="NCBIfam" id="NF001908">
    <property type="entry name" value="PRK00668.1"/>
    <property type="match status" value="1"/>
</dbReference>
<dbReference type="PANTHER" id="PTHR11349">
    <property type="entry name" value="NUCLEOSIDE DIPHOSPHATE KINASE"/>
    <property type="match status" value="1"/>
</dbReference>
<dbReference type="Pfam" id="PF00334">
    <property type="entry name" value="NDK"/>
    <property type="match status" value="1"/>
</dbReference>
<dbReference type="PRINTS" id="PR01243">
    <property type="entry name" value="NUCDPKINASE"/>
</dbReference>
<dbReference type="SMART" id="SM00562">
    <property type="entry name" value="NDK"/>
    <property type="match status" value="1"/>
</dbReference>
<dbReference type="SUPFAM" id="SSF54919">
    <property type="entry name" value="Nucleoside diphosphate kinase, NDK"/>
    <property type="match status" value="1"/>
</dbReference>
<dbReference type="PROSITE" id="PS00469">
    <property type="entry name" value="NDPK"/>
    <property type="match status" value="1"/>
</dbReference>
<dbReference type="PROSITE" id="PS51374">
    <property type="entry name" value="NDPK_LIKE"/>
    <property type="match status" value="1"/>
</dbReference>
<keyword id="KW-0067">ATP-binding</keyword>
<keyword id="KW-0963">Cytoplasm</keyword>
<keyword id="KW-0418">Kinase</keyword>
<keyword id="KW-0460">Magnesium</keyword>
<keyword id="KW-0479">Metal-binding</keyword>
<keyword id="KW-0546">Nucleotide metabolism</keyword>
<keyword id="KW-0547">Nucleotide-binding</keyword>
<keyword id="KW-0597">Phosphoprotein</keyword>
<keyword id="KW-0808">Transferase</keyword>
<sequence>MTERTLVLIKPDAVARGYVGEILGRIERKGLTISALELRTAPGDIAAAHYAEHEGRPFYPGLLEFITGGPLVAAVLEGPRAIAAFRQLAGGTDPVEKAVPGTIRGDFGLEAQENLVHGSDSVESAEREIALWFPQFAAN</sequence>
<organism>
    <name type="scientific">Rhodococcus opacus (strain B4)</name>
    <dbReference type="NCBI Taxonomy" id="632772"/>
    <lineage>
        <taxon>Bacteria</taxon>
        <taxon>Bacillati</taxon>
        <taxon>Actinomycetota</taxon>
        <taxon>Actinomycetes</taxon>
        <taxon>Mycobacteriales</taxon>
        <taxon>Nocardiaceae</taxon>
        <taxon>Rhodococcus</taxon>
    </lineage>
</organism>
<feature type="chain" id="PRO_1000192288" description="Nucleoside diphosphate kinase">
    <location>
        <begin position="1"/>
        <end position="139"/>
    </location>
</feature>
<feature type="active site" description="Pros-phosphohistidine intermediate" evidence="1">
    <location>
        <position position="117"/>
    </location>
</feature>
<feature type="binding site" evidence="1">
    <location>
        <position position="10"/>
    </location>
    <ligand>
        <name>ATP</name>
        <dbReference type="ChEBI" id="CHEBI:30616"/>
    </ligand>
</feature>
<feature type="binding site" evidence="1">
    <location>
        <position position="58"/>
    </location>
    <ligand>
        <name>ATP</name>
        <dbReference type="ChEBI" id="CHEBI:30616"/>
    </ligand>
</feature>
<feature type="binding site" evidence="1">
    <location>
        <position position="86"/>
    </location>
    <ligand>
        <name>ATP</name>
        <dbReference type="ChEBI" id="CHEBI:30616"/>
    </ligand>
</feature>
<feature type="binding site" evidence="1">
    <location>
        <position position="92"/>
    </location>
    <ligand>
        <name>ATP</name>
        <dbReference type="ChEBI" id="CHEBI:30616"/>
    </ligand>
</feature>
<feature type="binding site" evidence="1">
    <location>
        <position position="104"/>
    </location>
    <ligand>
        <name>ATP</name>
        <dbReference type="ChEBI" id="CHEBI:30616"/>
    </ligand>
</feature>
<feature type="binding site" evidence="1">
    <location>
        <position position="114"/>
    </location>
    <ligand>
        <name>ATP</name>
        <dbReference type="ChEBI" id="CHEBI:30616"/>
    </ligand>
</feature>
<evidence type="ECO:0000255" key="1">
    <source>
        <dbReference type="HAMAP-Rule" id="MF_00451"/>
    </source>
</evidence>
<protein>
    <recommendedName>
        <fullName evidence="1">Nucleoside diphosphate kinase</fullName>
        <shortName evidence="1">NDK</shortName>
        <shortName evidence="1">NDP kinase</shortName>
        <ecNumber evidence="1">2.7.4.6</ecNumber>
    </recommendedName>
    <alternativeName>
        <fullName evidence="1">Nucleoside-2-P kinase</fullName>
    </alternativeName>
</protein>